<accession>P0ACC1</accession>
<accession>P37186</accession>
<accession>Q46754</accession>
<organism>
    <name type="scientific">Escherichia coli (strain K12)</name>
    <dbReference type="NCBI Taxonomy" id="83333"/>
    <lineage>
        <taxon>Bacteria</taxon>
        <taxon>Pseudomonadati</taxon>
        <taxon>Pseudomonadota</taxon>
        <taxon>Gammaproteobacteria</taxon>
        <taxon>Enterobacterales</taxon>
        <taxon>Enterobacteriaceae</taxon>
        <taxon>Escherichia</taxon>
    </lineage>
</organism>
<reference key="1">
    <citation type="journal article" date="1995" name="Gene">
        <title>Cloning and sequencing of a previously unidentified gene that is involved in the biosynthesis of heme in Escherichia coli.</title>
        <authorList>
            <person name="Nakayashiki T."/>
            <person name="Nishimura K."/>
            <person name="Inokuchi H."/>
        </authorList>
    </citation>
    <scope>NUCLEOTIDE SEQUENCE [GENOMIC DNA]</scope>
    <source>
        <strain>K12</strain>
    </source>
</reference>
<reference key="2">
    <citation type="journal article" date="1995" name="J. Bacteriol.">
        <title>Expression of genes kdsA and kdsB involved in 3-deoxy-D-manno-octulosonic acid metabolism and biosynthesis of enterobacterial lipopolysaccharide is growth phase regulated primarily at the transcriptional level in Escherichia coli K-12.</title>
        <authorList>
            <person name="Strohmaier H."/>
            <person name="Remler P."/>
            <person name="Renner W."/>
            <person name="Hoegenauer G."/>
        </authorList>
    </citation>
    <scope>NUCLEOTIDE SEQUENCE [GENOMIC DNA]</scope>
</reference>
<reference key="3">
    <citation type="journal article" date="2002" name="Proc. Natl. Acad. Sci. U.S.A.">
        <title>HemK, a class of protein methyl transferase with similarity to DNA methyl transferases, methylates polypeptide chain release factors, and hemK knockout induces defects in translational termination.</title>
        <authorList>
            <person name="Nakahigashi K."/>
            <person name="Kubo N."/>
            <person name="Narita S."/>
            <person name="Shimaoka T."/>
            <person name="Goto S."/>
            <person name="Oshima T."/>
            <person name="Mori H."/>
            <person name="Maeda M."/>
            <person name="Wada C."/>
            <person name="Inokuchi H."/>
        </authorList>
    </citation>
    <scope>NUCLEOTIDE SEQUENCE [GENOMIC DNA]</scope>
    <scope>FUNCTION</scope>
    <scope>CATALYTIC ACTIVITY</scope>
    <scope>DISRUPTION PHENOTYPE</scope>
    <source>
        <strain>K12</strain>
    </source>
</reference>
<reference key="4">
    <citation type="journal article" date="1996" name="DNA Res.">
        <title>A 718-kb DNA sequence of the Escherichia coli K-12 genome corresponding to the 12.7-28.0 min region on the linkage map.</title>
        <authorList>
            <person name="Oshima T."/>
            <person name="Aiba H."/>
            <person name="Baba T."/>
            <person name="Fujita K."/>
            <person name="Hayashi K."/>
            <person name="Honjo A."/>
            <person name="Ikemoto K."/>
            <person name="Inada T."/>
            <person name="Itoh T."/>
            <person name="Kajihara M."/>
            <person name="Kanai K."/>
            <person name="Kashimoto K."/>
            <person name="Kimura S."/>
            <person name="Kitagawa M."/>
            <person name="Makino K."/>
            <person name="Masuda S."/>
            <person name="Miki T."/>
            <person name="Mizobuchi K."/>
            <person name="Mori H."/>
            <person name="Motomura K."/>
            <person name="Nakamura Y."/>
            <person name="Nashimoto H."/>
            <person name="Nishio Y."/>
            <person name="Saito N."/>
            <person name="Sampei G."/>
            <person name="Seki Y."/>
            <person name="Tagami H."/>
            <person name="Takemoto K."/>
            <person name="Wada C."/>
            <person name="Yamamoto Y."/>
            <person name="Yano M."/>
            <person name="Horiuchi T."/>
        </authorList>
    </citation>
    <scope>NUCLEOTIDE SEQUENCE [LARGE SCALE GENOMIC DNA]</scope>
    <source>
        <strain>K12 / W3110 / ATCC 27325 / DSM 5911</strain>
    </source>
</reference>
<reference key="5">
    <citation type="journal article" date="1997" name="Science">
        <title>The complete genome sequence of Escherichia coli K-12.</title>
        <authorList>
            <person name="Blattner F.R."/>
            <person name="Plunkett G. III"/>
            <person name="Bloch C.A."/>
            <person name="Perna N.T."/>
            <person name="Burland V."/>
            <person name="Riley M."/>
            <person name="Collado-Vides J."/>
            <person name="Glasner J.D."/>
            <person name="Rode C.K."/>
            <person name="Mayhew G.F."/>
            <person name="Gregor J."/>
            <person name="Davis N.W."/>
            <person name="Kirkpatrick H.A."/>
            <person name="Goeden M.A."/>
            <person name="Rose D.J."/>
            <person name="Mau B."/>
            <person name="Shao Y."/>
        </authorList>
    </citation>
    <scope>NUCLEOTIDE SEQUENCE [LARGE SCALE GENOMIC DNA]</scope>
    <source>
        <strain>K12 / MG1655 / ATCC 47076</strain>
    </source>
</reference>
<reference key="6">
    <citation type="journal article" date="2006" name="Mol. Syst. Biol.">
        <title>Highly accurate genome sequences of Escherichia coli K-12 strains MG1655 and W3110.</title>
        <authorList>
            <person name="Hayashi K."/>
            <person name="Morooka N."/>
            <person name="Yamamoto Y."/>
            <person name="Fujita K."/>
            <person name="Isono K."/>
            <person name="Choi S."/>
            <person name="Ohtsubo E."/>
            <person name="Baba T."/>
            <person name="Wanner B.L."/>
            <person name="Mori H."/>
            <person name="Horiuchi T."/>
        </authorList>
    </citation>
    <scope>NUCLEOTIDE SEQUENCE [LARGE SCALE GENOMIC DNA]</scope>
    <source>
        <strain>K12 / W3110 / ATCC 27325 / DSM 5911</strain>
    </source>
</reference>
<reference key="7">
    <citation type="journal article" date="2002" name="EMBO J.">
        <title>The hemK gene in Escherichia coli encodes the N(5)-glutamine methyltransferase that modifies peptide release factors.</title>
        <authorList>
            <person name="Heurgue-Hamard V."/>
            <person name="Champ S."/>
            <person name="Engstroem A."/>
            <person name="Ehrenberg M."/>
            <person name="Buckingham R.H."/>
        </authorList>
    </citation>
    <scope>FUNCTION</scope>
    <scope>CATALYTIC ACTIVITY</scope>
    <scope>GENE NAME</scope>
    <source>
        <strain>K12</strain>
    </source>
</reference>
<reference key="8">
    <citation type="journal article" date="2004" name="J. Mol. Biol.">
        <title>Structural characterization and comparative phylogenetic analysis of Escherichia coli HemK, a protein (N5)-glutamine methyltransferase.</title>
        <authorList>
            <person name="Yang Z."/>
            <person name="Shipman L."/>
            <person name="Zhang M."/>
            <person name="Anton B.P."/>
            <person name="Roberts R.J."/>
            <person name="Cheng X."/>
        </authorList>
    </citation>
    <scope>X-RAY CRYSTALLOGRAPHY (3.2 ANGSTROMS) IN COMPLEX WITH S-ADENOSYL-L-HOMOCYSTEINE</scope>
</reference>
<reference key="9">
    <citation type="journal article" date="2005" name="Mol. Cell">
        <title>Molecular basis for bacterial class I release factor methylation by PrmC.</title>
        <authorList>
            <person name="Graille M."/>
            <person name="Heurgue-Hamard V."/>
            <person name="Champ S."/>
            <person name="Mora L."/>
            <person name="Scrima N."/>
            <person name="Ulryck N."/>
            <person name="van Tilbeurgh H."/>
            <person name="Buckingham R.H."/>
        </authorList>
    </citation>
    <scope>X-RAY CRYSTALLOGRAPHY (3.1 ANGSTROMS) IN COMPLEX WITH RELEASE FACTOR RF1 AND S-ADENOSYL-L-HOMOCYSTEINE</scope>
    <scope>FUNCTION</scope>
    <scope>MUTAGENESIS OF ARG-36; LEU-40; ALA-41; PHE-42; GLU-44 AND ASN-183</scope>
    <scope>SUBUNIT</scope>
    <source>
        <strain>K12</strain>
    </source>
</reference>
<dbReference type="EC" id="2.1.1.297" evidence="2 3"/>
<dbReference type="EMBL" id="D28567">
    <property type="protein sequence ID" value="BAA05915.1"/>
    <property type="status" value="ALT_FRAME"/>
    <property type="molecule type" value="Genomic_DNA"/>
</dbReference>
<dbReference type="EMBL" id="U18555">
    <property type="protein sequence ID" value="AAC43438.1"/>
    <property type="molecule type" value="Genomic_DNA"/>
</dbReference>
<dbReference type="EMBL" id="AB078778">
    <property type="protein sequence ID" value="BAB84109.1"/>
    <property type="molecule type" value="Genomic_DNA"/>
</dbReference>
<dbReference type="EMBL" id="U00096">
    <property type="protein sequence ID" value="AAC74296.1"/>
    <property type="molecule type" value="Genomic_DNA"/>
</dbReference>
<dbReference type="EMBL" id="AP009048">
    <property type="protein sequence ID" value="BAA36070.1"/>
    <property type="molecule type" value="Genomic_DNA"/>
</dbReference>
<dbReference type="PIR" id="I83570">
    <property type="entry name" value="I83570"/>
</dbReference>
<dbReference type="RefSeq" id="NP_415730.1">
    <property type="nucleotide sequence ID" value="NC_000913.3"/>
</dbReference>
<dbReference type="RefSeq" id="WP_000456467.1">
    <property type="nucleotide sequence ID" value="NZ_SSZK01000010.1"/>
</dbReference>
<dbReference type="PDB" id="1T43">
    <property type="method" value="X-ray"/>
    <property type="resolution" value="3.20 A"/>
    <property type="chains" value="A=1-277"/>
</dbReference>
<dbReference type="PDB" id="2B3T">
    <property type="method" value="X-ray"/>
    <property type="resolution" value="3.10 A"/>
    <property type="chains" value="A=1-276"/>
</dbReference>
<dbReference type="PDBsum" id="1T43"/>
<dbReference type="PDBsum" id="2B3T"/>
<dbReference type="SMR" id="P0ACC1"/>
<dbReference type="BioGRID" id="4260113">
    <property type="interactions" value="37"/>
</dbReference>
<dbReference type="FunCoup" id="P0ACC1">
    <property type="interactions" value="645"/>
</dbReference>
<dbReference type="IntAct" id="P0ACC1">
    <property type="interactions" value="1"/>
</dbReference>
<dbReference type="STRING" id="511145.b1212"/>
<dbReference type="DrugBank" id="DB01752">
    <property type="generic name" value="S-adenosyl-L-homocysteine"/>
</dbReference>
<dbReference type="PaxDb" id="511145-b1212"/>
<dbReference type="EnsemblBacteria" id="AAC74296">
    <property type="protein sequence ID" value="AAC74296"/>
    <property type="gene ID" value="b1212"/>
</dbReference>
<dbReference type="GeneID" id="75171323"/>
<dbReference type="GeneID" id="945779"/>
<dbReference type="KEGG" id="ecj:JW1203"/>
<dbReference type="KEGG" id="eco:b1212"/>
<dbReference type="KEGG" id="ecoc:C3026_07120"/>
<dbReference type="PATRIC" id="fig|1411691.4.peg.1072"/>
<dbReference type="EchoBASE" id="EB2323"/>
<dbReference type="eggNOG" id="COG2890">
    <property type="taxonomic scope" value="Bacteria"/>
</dbReference>
<dbReference type="HOGENOM" id="CLU_018398_3_1_6"/>
<dbReference type="InParanoid" id="P0ACC1"/>
<dbReference type="OMA" id="DFDARYW"/>
<dbReference type="OrthoDB" id="9800643at2"/>
<dbReference type="PhylomeDB" id="P0ACC1"/>
<dbReference type="BioCyc" id="EcoCyc:EG12424-MONOMER"/>
<dbReference type="BioCyc" id="MetaCyc:EG12424-MONOMER"/>
<dbReference type="BRENDA" id="2.1.1.297">
    <property type="organism ID" value="2026"/>
</dbReference>
<dbReference type="EvolutionaryTrace" id="P0ACC1"/>
<dbReference type="PRO" id="PR:P0ACC1"/>
<dbReference type="Proteomes" id="UP000000625">
    <property type="component" value="Chromosome"/>
</dbReference>
<dbReference type="GO" id="GO:0003676">
    <property type="term" value="F:nucleic acid binding"/>
    <property type="evidence" value="ECO:0007669"/>
    <property type="project" value="InterPro"/>
</dbReference>
<dbReference type="GO" id="GO:0008276">
    <property type="term" value="F:protein methyltransferase activity"/>
    <property type="evidence" value="ECO:0000314"/>
    <property type="project" value="UniProtKB"/>
</dbReference>
<dbReference type="GO" id="GO:0102559">
    <property type="term" value="F:protein-(glutamine-N5) methyltransferase activity"/>
    <property type="evidence" value="ECO:0007669"/>
    <property type="project" value="UniProtKB-EC"/>
</dbReference>
<dbReference type="GO" id="GO:0036009">
    <property type="term" value="F:protein-glutamine N-methyltransferase activity"/>
    <property type="evidence" value="ECO:0000314"/>
    <property type="project" value="UniProtKB"/>
</dbReference>
<dbReference type="GO" id="GO:0008757">
    <property type="term" value="F:S-adenosylmethionine-dependent methyltransferase activity"/>
    <property type="evidence" value="ECO:0000314"/>
    <property type="project" value="UniProtKB"/>
</dbReference>
<dbReference type="GO" id="GO:0018364">
    <property type="term" value="P:peptidyl-glutamine methylation"/>
    <property type="evidence" value="ECO:0000314"/>
    <property type="project" value="UniProtKB"/>
</dbReference>
<dbReference type="GO" id="GO:0006479">
    <property type="term" value="P:protein methylation"/>
    <property type="evidence" value="ECO:0000314"/>
    <property type="project" value="UniProtKB"/>
</dbReference>
<dbReference type="GO" id="GO:0010468">
    <property type="term" value="P:regulation of gene expression"/>
    <property type="evidence" value="ECO:0000315"/>
    <property type="project" value="UniProtKB"/>
</dbReference>
<dbReference type="GO" id="GO:0006415">
    <property type="term" value="P:translational termination"/>
    <property type="evidence" value="ECO:0000315"/>
    <property type="project" value="UniProtKB"/>
</dbReference>
<dbReference type="CDD" id="cd02440">
    <property type="entry name" value="AdoMet_MTases"/>
    <property type="match status" value="1"/>
</dbReference>
<dbReference type="FunFam" id="1.10.8.10:FF:000032">
    <property type="entry name" value="Release factor glutamine methyltransferase"/>
    <property type="match status" value="1"/>
</dbReference>
<dbReference type="FunFam" id="3.40.50.150:FF:000053">
    <property type="entry name" value="Release factor glutamine methyltransferase"/>
    <property type="match status" value="1"/>
</dbReference>
<dbReference type="Gene3D" id="1.10.8.10">
    <property type="entry name" value="DNA helicase RuvA subunit, C-terminal domain"/>
    <property type="match status" value="1"/>
</dbReference>
<dbReference type="Gene3D" id="3.40.50.150">
    <property type="entry name" value="Vaccinia Virus protein VP39"/>
    <property type="match status" value="1"/>
</dbReference>
<dbReference type="HAMAP" id="MF_02126">
    <property type="entry name" value="RF_methyltr_PrmC"/>
    <property type="match status" value="1"/>
</dbReference>
<dbReference type="InterPro" id="IPR002052">
    <property type="entry name" value="DNA_methylase_N6_adenine_CS"/>
</dbReference>
<dbReference type="InterPro" id="IPR004556">
    <property type="entry name" value="HemK-like"/>
</dbReference>
<dbReference type="InterPro" id="IPR050320">
    <property type="entry name" value="N5-glutamine_MTase"/>
</dbReference>
<dbReference type="InterPro" id="IPR040758">
    <property type="entry name" value="PrmC_N"/>
</dbReference>
<dbReference type="InterPro" id="IPR019874">
    <property type="entry name" value="RF_methyltr_PrmC"/>
</dbReference>
<dbReference type="InterPro" id="IPR029063">
    <property type="entry name" value="SAM-dependent_MTases_sf"/>
</dbReference>
<dbReference type="InterPro" id="IPR007848">
    <property type="entry name" value="Small_mtfrase_dom"/>
</dbReference>
<dbReference type="NCBIfam" id="TIGR00536">
    <property type="entry name" value="hemK_fam"/>
    <property type="match status" value="1"/>
</dbReference>
<dbReference type="NCBIfam" id="TIGR03534">
    <property type="entry name" value="RF_mod_PrmC"/>
    <property type="match status" value="1"/>
</dbReference>
<dbReference type="PANTHER" id="PTHR18895">
    <property type="entry name" value="HEMK METHYLTRANSFERASE"/>
    <property type="match status" value="1"/>
</dbReference>
<dbReference type="PANTHER" id="PTHR18895:SF74">
    <property type="entry name" value="MTRF1L RELEASE FACTOR GLUTAMINE METHYLTRANSFERASE"/>
    <property type="match status" value="1"/>
</dbReference>
<dbReference type="Pfam" id="PF05175">
    <property type="entry name" value="MTS"/>
    <property type="match status" value="1"/>
</dbReference>
<dbReference type="Pfam" id="PF17827">
    <property type="entry name" value="PrmC_N"/>
    <property type="match status" value="1"/>
</dbReference>
<dbReference type="SUPFAM" id="SSF53335">
    <property type="entry name" value="S-adenosyl-L-methionine-dependent methyltransferases"/>
    <property type="match status" value="1"/>
</dbReference>
<comment type="function">
    <text evidence="2 3 5">Methylates the class 1 translation termination release factors RF1/PrfA and RF2/PrfB on the glutamine residue of the universally conserved GGQ motif, i.e. on 'Gln-235' in RF1 and on 'Gln-252' in RF2.</text>
</comment>
<comment type="catalytic activity">
    <reaction evidence="2 3">
        <text>L-glutaminyl-[peptide chain release factor] + S-adenosyl-L-methionine = N(5)-methyl-L-glutaminyl-[peptide chain release factor] + S-adenosyl-L-homocysteine + H(+)</text>
        <dbReference type="Rhea" id="RHEA:42896"/>
        <dbReference type="Rhea" id="RHEA-COMP:10271"/>
        <dbReference type="Rhea" id="RHEA-COMP:10272"/>
        <dbReference type="ChEBI" id="CHEBI:15378"/>
        <dbReference type="ChEBI" id="CHEBI:30011"/>
        <dbReference type="ChEBI" id="CHEBI:57856"/>
        <dbReference type="ChEBI" id="CHEBI:59789"/>
        <dbReference type="ChEBI" id="CHEBI:61891"/>
        <dbReference type="EC" id="2.1.1.297"/>
    </reaction>
</comment>
<comment type="subunit">
    <text evidence="4 5">Interacts with PrfA and PrfB.</text>
</comment>
<comment type="disruption phenotype">
    <text evidence="2">Cells lacking this gene suffer severe growth defects, but also show a global shift in gene expression to anaerobic respiration. Also shows defects in translational termination via an enhanced rate of read-through of nonsense codons and induction of transfer-mRNA-mediated tagging of proteins within the cell.</text>
</comment>
<comment type="similarity">
    <text evidence="1">Belongs to the protein N5-glutamine methyltransferase family. PrmC subfamily.</text>
</comment>
<comment type="caution">
    <text evidence="9">Was originally thought to be involved in the oxidation of protoporphyrinogen into protoporphyrin IX.</text>
</comment>
<comment type="sequence caution" evidence="6">
    <conflict type="frameshift">
        <sequence resource="EMBL-CDS" id="BAA05915"/>
    </conflict>
</comment>
<sequence>MEYQHWLREAISQLQASESPRRDAEILLEHVTGRGRTFILAFGETQLTDEQCQQLDALLTRRRDGEPIAHLTGVREFWSLPLFVSPATLIPRPDTECLVEQALARLPEQPCRILDLGTGTGAIALALASERPDCEIIAVDRMPDAVSLAQRNAQHLAIKNIHILQSDWFSALAGQQFAMIVSNPPYIDEQDPHLQQGDVRFEPLTALVAADSGMADIVHIIEQSRNALVSGGFLLLEHGWQQGEAVRQAFILAGYHDVETCRDYGDNERVTLGRYYQ</sequence>
<feature type="chain" id="PRO_0000157156" description="Release factor glutamine methyltransferase">
    <location>
        <begin position="1"/>
        <end position="277"/>
    </location>
</feature>
<feature type="binding site" evidence="1 7">
    <location>
        <begin position="117"/>
        <end position="121"/>
    </location>
    <ligand>
        <name>S-adenosyl-L-methionine</name>
        <dbReference type="ChEBI" id="CHEBI:59789"/>
    </ligand>
</feature>
<feature type="binding site" evidence="7 8">
    <location>
        <position position="140"/>
    </location>
    <ligand>
        <name>S-adenosyl-L-methionine</name>
        <dbReference type="ChEBI" id="CHEBI:59789"/>
    </ligand>
</feature>
<feature type="binding site" evidence="7 8">
    <location>
        <position position="168"/>
    </location>
    <ligand>
        <name>S-adenosyl-L-methionine</name>
        <dbReference type="ChEBI" id="CHEBI:59789"/>
    </ligand>
</feature>
<feature type="binding site" evidence="5">
    <location>
        <begin position="183"/>
        <end position="186"/>
    </location>
    <ligand>
        <name>substrate</name>
    </ligand>
</feature>
<feature type="binding site" evidence="7">
    <location>
        <position position="183"/>
    </location>
    <ligand>
        <name>S-adenosyl-L-methionine</name>
        <dbReference type="ChEBI" id="CHEBI:59789"/>
    </ligand>
</feature>
<feature type="mutagenesis site" description="17% of wild-type RF1 methylation activity." evidence="5">
    <original>R</original>
    <variation>A</variation>
    <location>
        <position position="36"/>
    </location>
</feature>
<feature type="mutagenesis site" description="60% of wild-type RF1 methylation activity." evidence="5">
    <original>L</original>
    <variation>A</variation>
    <location>
        <position position="40"/>
    </location>
</feature>
<feature type="mutagenesis site" description="7% of wild-type RF1 methylation activity. Strongly reduced affinity for S-adenosyl-L-methionine." evidence="5">
    <original>A</original>
    <variation>R</variation>
    <location>
        <position position="41"/>
    </location>
</feature>
<feature type="mutagenesis site" description="40% of wild-type RF1 methylation activity." evidence="5">
    <original>F</original>
    <variation>A</variation>
    <location>
        <position position="42"/>
    </location>
</feature>
<feature type="mutagenesis site" description="62% of wild-type RF1 methylation activity." evidence="5">
    <original>E</original>
    <variation>A</variation>
    <location>
        <position position="44"/>
    </location>
</feature>
<feature type="mutagenesis site" description="33% of wild-type RF1 methylation activity." evidence="5">
    <original>E</original>
    <variation>R</variation>
    <location>
        <position position="44"/>
    </location>
</feature>
<feature type="mutagenesis site" description="Less than 2% of wild-type RF1 methylation activity." evidence="5">
    <original>N</original>
    <variation>A</variation>
    <location>
        <position position="183"/>
    </location>
</feature>
<feature type="helix" evidence="11">
    <location>
        <begin position="3"/>
        <end position="12"/>
    </location>
</feature>
<feature type="turn" evidence="11">
    <location>
        <begin position="13"/>
        <end position="16"/>
    </location>
</feature>
<feature type="helix" evidence="11">
    <location>
        <begin position="20"/>
        <end position="32"/>
    </location>
</feature>
<feature type="helix" evidence="11">
    <location>
        <begin position="36"/>
        <end position="41"/>
    </location>
</feature>
<feature type="turn" evidence="11">
    <location>
        <begin position="42"/>
        <end position="44"/>
    </location>
</feature>
<feature type="helix" evidence="11">
    <location>
        <begin position="49"/>
        <end position="63"/>
    </location>
</feature>
<feature type="helix" evidence="11">
    <location>
        <begin position="68"/>
        <end position="71"/>
    </location>
</feature>
<feature type="strand" evidence="11">
    <location>
        <begin position="74"/>
        <end position="77"/>
    </location>
</feature>
<feature type="strand" evidence="11">
    <location>
        <begin position="80"/>
        <end position="83"/>
    </location>
</feature>
<feature type="helix" evidence="11">
    <location>
        <begin position="95"/>
        <end position="105"/>
    </location>
</feature>
<feature type="strand" evidence="11">
    <location>
        <begin position="112"/>
        <end position="116"/>
    </location>
</feature>
<feature type="helix" evidence="11">
    <location>
        <begin position="122"/>
        <end position="130"/>
    </location>
</feature>
<feature type="strand" evidence="11">
    <location>
        <begin position="134"/>
        <end position="139"/>
    </location>
</feature>
<feature type="helix" evidence="11">
    <location>
        <begin position="143"/>
        <end position="156"/>
    </location>
</feature>
<feature type="strand" evidence="11">
    <location>
        <begin position="160"/>
        <end position="164"/>
    </location>
</feature>
<feature type="helix" evidence="11">
    <location>
        <begin position="170"/>
        <end position="172"/>
    </location>
</feature>
<feature type="strand" evidence="11">
    <location>
        <begin position="177"/>
        <end position="182"/>
    </location>
</feature>
<feature type="helix" evidence="11">
    <location>
        <begin position="192"/>
        <end position="195"/>
    </location>
</feature>
<feature type="helix" evidence="11">
    <location>
        <begin position="198"/>
        <end position="200"/>
    </location>
</feature>
<feature type="turn" evidence="11">
    <location>
        <begin position="205"/>
        <end position="207"/>
    </location>
</feature>
<feature type="helix" evidence="11">
    <location>
        <begin position="210"/>
        <end position="213"/>
    </location>
</feature>
<feature type="helix" evidence="11">
    <location>
        <begin position="215"/>
        <end position="224"/>
    </location>
</feature>
<feature type="helix" evidence="11">
    <location>
        <begin position="225"/>
        <end position="227"/>
    </location>
</feature>
<feature type="strand" evidence="11">
    <location>
        <begin position="228"/>
        <end position="237"/>
    </location>
</feature>
<feature type="helix" evidence="10">
    <location>
        <begin position="240"/>
        <end position="242"/>
    </location>
</feature>
<feature type="helix" evidence="11">
    <location>
        <begin position="243"/>
        <end position="252"/>
    </location>
</feature>
<feature type="strand" evidence="11">
    <location>
        <begin position="260"/>
        <end position="262"/>
    </location>
</feature>
<feature type="strand" evidence="11">
    <location>
        <begin position="266"/>
        <end position="274"/>
    </location>
</feature>
<gene>
    <name type="primary">prmC</name>
    <name type="synonym">hemK</name>
    <name type="ordered locus">b1212</name>
    <name type="ordered locus">JW1203</name>
</gene>
<evidence type="ECO:0000255" key="1">
    <source>
        <dbReference type="HAMAP-Rule" id="MF_02126"/>
    </source>
</evidence>
<evidence type="ECO:0000269" key="2">
    <source>
    </source>
</evidence>
<evidence type="ECO:0000269" key="3">
    <source>
    </source>
</evidence>
<evidence type="ECO:0000269" key="4">
    <source>
    </source>
</evidence>
<evidence type="ECO:0000269" key="5">
    <source>
    </source>
</evidence>
<evidence type="ECO:0000305" key="6"/>
<evidence type="ECO:0000305" key="7">
    <source>
    </source>
</evidence>
<evidence type="ECO:0000305" key="8">
    <source>
    </source>
</evidence>
<evidence type="ECO:0000305" key="9">
    <source>
    </source>
</evidence>
<evidence type="ECO:0007829" key="10">
    <source>
        <dbReference type="PDB" id="1T43"/>
    </source>
</evidence>
<evidence type="ECO:0007829" key="11">
    <source>
        <dbReference type="PDB" id="2B3T"/>
    </source>
</evidence>
<keyword id="KW-0002">3D-structure</keyword>
<keyword id="KW-0489">Methyltransferase</keyword>
<keyword id="KW-1185">Reference proteome</keyword>
<keyword id="KW-0949">S-adenosyl-L-methionine</keyword>
<keyword id="KW-0808">Transferase</keyword>
<protein>
    <recommendedName>
        <fullName evidence="1">Release factor glutamine methyltransferase</fullName>
        <shortName evidence="1">RF MTase</shortName>
        <ecNumber evidence="2 3">2.1.1.297</ecNumber>
    </recommendedName>
    <alternativeName>
        <fullName>M.EcoKHemKP</fullName>
    </alternativeName>
    <alternativeName>
        <fullName evidence="1">N5-glutamine methyltransferase PrmC</fullName>
    </alternativeName>
    <alternativeName>
        <fullName>Protein release factor methylation C</fullName>
    </alternativeName>
    <alternativeName>
        <fullName evidence="1">Protein-(glutamine-N5) MTase PrmC</fullName>
    </alternativeName>
    <alternativeName>
        <fullName evidence="1">Protein-glutamine N-methyltransferase PrmC</fullName>
    </alternativeName>
</protein>
<proteinExistence type="evidence at protein level"/>
<name>PRMC_ECOLI</name>